<accession>O24697</accession>
<organism>
    <name type="scientific">Synechococcus sp. (strain ATCC 27144 / PCC 6301 / SAUG 1402/1)</name>
    <name type="common">Anacystis nidulans</name>
    <dbReference type="NCBI Taxonomy" id="269084"/>
    <lineage>
        <taxon>Bacteria</taxon>
        <taxon>Bacillati</taxon>
        <taxon>Cyanobacteriota</taxon>
        <taxon>Cyanophyceae</taxon>
        <taxon>Synechococcales</taxon>
        <taxon>Synechococcaceae</taxon>
        <taxon>Synechococcus</taxon>
    </lineage>
</organism>
<keyword id="KW-0687">Ribonucleoprotein</keyword>
<keyword id="KW-0689">Ribosomal protein</keyword>
<feature type="chain" id="PRO_0000130478" description="Large ribosomal subunit protein uL29">
    <location>
        <begin position="1"/>
        <end position="64"/>
    </location>
</feature>
<reference key="1">
    <citation type="journal article" date="1997" name="Gene">
        <title>Organization of a large gene cluster encoding ribosomal proteins in the cyanobacterium Synechococcus sp. strain PCC 6301: comparison of gene clusters among cyanobacteria, eubacteria and chloroplast genomes.</title>
        <authorList>
            <person name="Sugita M."/>
            <person name="Sugishita H."/>
            <person name="Fujishiro T."/>
            <person name="Tsuboi M."/>
            <person name="Sugita C."/>
            <person name="Endo T."/>
            <person name="Sugiura M."/>
        </authorList>
    </citation>
    <scope>NUCLEOTIDE SEQUENCE [GENOMIC DNA]</scope>
</reference>
<reference key="2">
    <citation type="journal article" date="2007" name="Photosyn. Res.">
        <title>Complete nucleotide sequence of the freshwater unicellular cyanobacterium Synechococcus elongatus PCC 6301 chromosome: gene content and organization.</title>
        <authorList>
            <person name="Sugita C."/>
            <person name="Ogata K."/>
            <person name="Shikata M."/>
            <person name="Jikuya H."/>
            <person name="Takano J."/>
            <person name="Furumichi M."/>
            <person name="Kanehisa M."/>
            <person name="Omata T."/>
            <person name="Sugiura M."/>
            <person name="Sugita M."/>
        </authorList>
    </citation>
    <scope>NUCLEOTIDE SEQUENCE [LARGE SCALE GENOMIC DNA]</scope>
    <source>
        <strain>ATCC 27144 / PCC 6301 / SAUG 1402/1</strain>
    </source>
</reference>
<sequence>MALPKIEDVRNLSDADLAEKIAEAKRELFDLRFQRATRQLEKPHLFKHTKHRLAQLLTVERERQ</sequence>
<dbReference type="EMBL" id="AB000111">
    <property type="protein sequence ID" value="BAA22457.1"/>
    <property type="molecule type" value="Genomic_DNA"/>
</dbReference>
<dbReference type="EMBL" id="AP008231">
    <property type="protein sequence ID" value="BAD80063.1"/>
    <property type="molecule type" value="Genomic_DNA"/>
</dbReference>
<dbReference type="RefSeq" id="WP_011244183.1">
    <property type="nucleotide sequence ID" value="NZ_CP085785.1"/>
</dbReference>
<dbReference type="SMR" id="O24697"/>
<dbReference type="GeneID" id="72431107"/>
<dbReference type="KEGG" id="syc:syc1873_d"/>
<dbReference type="eggNOG" id="COG0255">
    <property type="taxonomic scope" value="Bacteria"/>
</dbReference>
<dbReference type="Proteomes" id="UP000001175">
    <property type="component" value="Chromosome"/>
</dbReference>
<dbReference type="GO" id="GO:0022625">
    <property type="term" value="C:cytosolic large ribosomal subunit"/>
    <property type="evidence" value="ECO:0007669"/>
    <property type="project" value="TreeGrafter"/>
</dbReference>
<dbReference type="GO" id="GO:0003735">
    <property type="term" value="F:structural constituent of ribosome"/>
    <property type="evidence" value="ECO:0007669"/>
    <property type="project" value="InterPro"/>
</dbReference>
<dbReference type="GO" id="GO:0006412">
    <property type="term" value="P:translation"/>
    <property type="evidence" value="ECO:0007669"/>
    <property type="project" value="UniProtKB-UniRule"/>
</dbReference>
<dbReference type="CDD" id="cd00427">
    <property type="entry name" value="Ribosomal_L29_HIP"/>
    <property type="match status" value="1"/>
</dbReference>
<dbReference type="FunFam" id="1.10.287.310:FF:000001">
    <property type="entry name" value="50S ribosomal protein L29"/>
    <property type="match status" value="1"/>
</dbReference>
<dbReference type="Gene3D" id="1.10.287.310">
    <property type="match status" value="1"/>
</dbReference>
<dbReference type="HAMAP" id="MF_00374">
    <property type="entry name" value="Ribosomal_uL29"/>
    <property type="match status" value="1"/>
</dbReference>
<dbReference type="InterPro" id="IPR050063">
    <property type="entry name" value="Ribosomal_protein_uL29"/>
</dbReference>
<dbReference type="InterPro" id="IPR001854">
    <property type="entry name" value="Ribosomal_uL29"/>
</dbReference>
<dbReference type="InterPro" id="IPR018254">
    <property type="entry name" value="Ribosomal_uL29_CS"/>
</dbReference>
<dbReference type="InterPro" id="IPR036049">
    <property type="entry name" value="Ribosomal_uL29_sf"/>
</dbReference>
<dbReference type="NCBIfam" id="TIGR00012">
    <property type="entry name" value="L29"/>
    <property type="match status" value="1"/>
</dbReference>
<dbReference type="PANTHER" id="PTHR10916">
    <property type="entry name" value="60S RIBOSOMAL PROTEIN L35/50S RIBOSOMAL PROTEIN L29"/>
    <property type="match status" value="1"/>
</dbReference>
<dbReference type="PANTHER" id="PTHR10916:SF0">
    <property type="entry name" value="LARGE RIBOSOMAL SUBUNIT PROTEIN UL29C"/>
    <property type="match status" value="1"/>
</dbReference>
<dbReference type="Pfam" id="PF00831">
    <property type="entry name" value="Ribosomal_L29"/>
    <property type="match status" value="1"/>
</dbReference>
<dbReference type="SUPFAM" id="SSF46561">
    <property type="entry name" value="Ribosomal protein L29 (L29p)"/>
    <property type="match status" value="1"/>
</dbReference>
<dbReference type="PROSITE" id="PS00579">
    <property type="entry name" value="RIBOSOMAL_L29"/>
    <property type="match status" value="1"/>
</dbReference>
<proteinExistence type="inferred from homology"/>
<gene>
    <name type="primary">rpmC</name>
    <name type="synonym">rpl29</name>
    <name type="ordered locus">syc1873_d</name>
</gene>
<protein>
    <recommendedName>
        <fullName evidence="1">Large ribosomal subunit protein uL29</fullName>
    </recommendedName>
    <alternativeName>
        <fullName>50S ribosomal protein L29</fullName>
    </alternativeName>
</protein>
<name>RL29_SYNP6</name>
<evidence type="ECO:0000305" key="1"/>
<comment type="similarity">
    <text evidence="1">Belongs to the universal ribosomal protein uL29 family.</text>
</comment>